<feature type="chain" id="PRO_0000066998" description="Protein HOS4">
    <location>
        <begin position="1"/>
        <end position="1083"/>
    </location>
</feature>
<feature type="repeat" description="ANK 1">
    <location>
        <begin position="329"/>
        <end position="359"/>
    </location>
</feature>
<feature type="repeat" description="ANK 2">
    <location>
        <begin position="363"/>
        <end position="392"/>
    </location>
</feature>
<feature type="repeat" description="ANK 3">
    <location>
        <begin position="398"/>
        <end position="427"/>
    </location>
</feature>
<feature type="repeat" description="ANK 4">
    <location>
        <begin position="532"/>
        <end position="561"/>
    </location>
</feature>
<feature type="repeat" description="ANK 5">
    <location>
        <begin position="593"/>
        <end position="622"/>
    </location>
</feature>
<feature type="region of interest" description="Disordered" evidence="1">
    <location>
        <begin position="1"/>
        <end position="233"/>
    </location>
</feature>
<feature type="region of interest" description="Disordered" evidence="1">
    <location>
        <begin position="267"/>
        <end position="328"/>
    </location>
</feature>
<feature type="region of interest" description="Disordered" evidence="1">
    <location>
        <begin position="472"/>
        <end position="516"/>
    </location>
</feature>
<feature type="region of interest" description="Disordered" evidence="1">
    <location>
        <begin position="661"/>
        <end position="742"/>
    </location>
</feature>
<feature type="region of interest" description="Disordered" evidence="1">
    <location>
        <begin position="762"/>
        <end position="790"/>
    </location>
</feature>
<feature type="compositionally biased region" description="Basic and acidic residues" evidence="1">
    <location>
        <begin position="24"/>
        <end position="62"/>
    </location>
</feature>
<feature type="compositionally biased region" description="Polar residues" evidence="1">
    <location>
        <begin position="67"/>
        <end position="85"/>
    </location>
</feature>
<feature type="compositionally biased region" description="Basic and acidic residues" evidence="1">
    <location>
        <begin position="86"/>
        <end position="118"/>
    </location>
</feature>
<feature type="compositionally biased region" description="Polar residues" evidence="1">
    <location>
        <begin position="135"/>
        <end position="149"/>
    </location>
</feature>
<feature type="compositionally biased region" description="Basic and acidic residues" evidence="1">
    <location>
        <begin position="151"/>
        <end position="166"/>
    </location>
</feature>
<feature type="compositionally biased region" description="Acidic residues" evidence="1">
    <location>
        <begin position="167"/>
        <end position="185"/>
    </location>
</feature>
<feature type="compositionally biased region" description="Basic and acidic residues" evidence="1">
    <location>
        <begin position="186"/>
        <end position="207"/>
    </location>
</feature>
<feature type="compositionally biased region" description="Polar residues" evidence="1">
    <location>
        <begin position="277"/>
        <end position="293"/>
    </location>
</feature>
<feature type="compositionally biased region" description="Low complexity" evidence="1">
    <location>
        <begin position="300"/>
        <end position="310"/>
    </location>
</feature>
<feature type="compositionally biased region" description="Basic residues" evidence="1">
    <location>
        <begin position="314"/>
        <end position="323"/>
    </location>
</feature>
<feature type="compositionally biased region" description="Polar residues" evidence="1">
    <location>
        <begin position="481"/>
        <end position="496"/>
    </location>
</feature>
<feature type="compositionally biased region" description="Acidic residues" evidence="1">
    <location>
        <begin position="665"/>
        <end position="675"/>
    </location>
</feature>
<feature type="compositionally biased region" description="Basic and acidic residues" evidence="1">
    <location>
        <begin position="721"/>
        <end position="740"/>
    </location>
</feature>
<feature type="modified residue" description="Phosphoserine" evidence="5">
    <location>
        <position position="14"/>
    </location>
</feature>
<feature type="modified residue" description="Phosphoserine" evidence="5">
    <location>
        <position position="16"/>
    </location>
</feature>
<feature type="modified residue" description="Phosphothreonine" evidence="5">
    <location>
        <position position="37"/>
    </location>
</feature>
<feature type="modified residue" description="Phosphoserine" evidence="4">
    <location>
        <position position="67"/>
    </location>
</feature>
<feature type="modified residue" description="Phosphoserine" evidence="5">
    <location>
        <position position="290"/>
    </location>
</feature>
<feature type="modified residue" description="Phosphoserine" evidence="5">
    <location>
        <position position="507"/>
    </location>
</feature>
<feature type="modified residue" description="Phosphoserine" evidence="4">
    <location>
        <position position="698"/>
    </location>
</feature>
<feature type="modified residue" description="Phosphothreonine" evidence="4">
    <location>
        <position position="700"/>
    </location>
</feature>
<feature type="modified residue" description="Phosphoserine" evidence="3 5">
    <location>
        <position position="778"/>
    </location>
</feature>
<proteinExistence type="evidence at protein level"/>
<dbReference type="EMBL" id="Z38125">
    <property type="protein sequence ID" value="CAA86268.1"/>
    <property type="molecule type" value="Genomic_DNA"/>
</dbReference>
<dbReference type="EMBL" id="BK006942">
    <property type="protein sequence ID" value="DAA08441.1"/>
    <property type="molecule type" value="Genomic_DNA"/>
</dbReference>
<dbReference type="PIR" id="S48460">
    <property type="entry name" value="S48460"/>
</dbReference>
<dbReference type="RefSeq" id="NP_012154.1">
    <property type="nucleotide sequence ID" value="NM_001179460.1"/>
</dbReference>
<dbReference type="SMR" id="P40480"/>
<dbReference type="BioGRID" id="34879">
    <property type="interactions" value="207"/>
</dbReference>
<dbReference type="ComplexPortal" id="CPX-1342">
    <property type="entry name" value="SET3C histone deacetylase complex"/>
</dbReference>
<dbReference type="DIP" id="DIP-1765N"/>
<dbReference type="FunCoup" id="P40480">
    <property type="interactions" value="211"/>
</dbReference>
<dbReference type="IntAct" id="P40480">
    <property type="interactions" value="19"/>
</dbReference>
<dbReference type="MINT" id="P40480"/>
<dbReference type="STRING" id="4932.YIL112W"/>
<dbReference type="iPTMnet" id="P40480"/>
<dbReference type="PaxDb" id="4932-YIL112W"/>
<dbReference type="PeptideAtlas" id="P40480"/>
<dbReference type="EnsemblFungi" id="YIL112W_mRNA">
    <property type="protein sequence ID" value="YIL112W"/>
    <property type="gene ID" value="YIL112W"/>
</dbReference>
<dbReference type="GeneID" id="854694"/>
<dbReference type="KEGG" id="sce:YIL112W"/>
<dbReference type="AGR" id="SGD:S000001374"/>
<dbReference type="SGD" id="S000001374">
    <property type="gene designation" value="HOS4"/>
</dbReference>
<dbReference type="VEuPathDB" id="FungiDB:YIL112W"/>
<dbReference type="eggNOG" id="KOG0504">
    <property type="taxonomic scope" value="Eukaryota"/>
</dbReference>
<dbReference type="GeneTree" id="ENSGT00940000173654"/>
<dbReference type="HOGENOM" id="CLU_006901_0_0_1"/>
<dbReference type="InParanoid" id="P40480"/>
<dbReference type="OMA" id="PLHFSGE"/>
<dbReference type="OrthoDB" id="194358at2759"/>
<dbReference type="BioCyc" id="YEAST:G3O-31366-MONOMER"/>
<dbReference type="Reactome" id="R-SCE-204005">
    <property type="pathway name" value="COPII-mediated vesicle transport"/>
</dbReference>
<dbReference type="Reactome" id="R-SCE-3295583">
    <property type="pathway name" value="TRP channels"/>
</dbReference>
<dbReference type="Reactome" id="R-SCE-983168">
    <property type="pathway name" value="Antigen processing: Ubiquitination &amp; Proteasome degradation"/>
</dbReference>
<dbReference type="BioGRID-ORCS" id="854694">
    <property type="hits" value="1 hit in 10 CRISPR screens"/>
</dbReference>
<dbReference type="PRO" id="PR:P40480"/>
<dbReference type="Proteomes" id="UP000002311">
    <property type="component" value="Chromosome IX"/>
</dbReference>
<dbReference type="RNAct" id="P40480">
    <property type="molecule type" value="protein"/>
</dbReference>
<dbReference type="GO" id="GO:0005634">
    <property type="term" value="C:nucleus"/>
    <property type="evidence" value="ECO:0000314"/>
    <property type="project" value="ComplexPortal"/>
</dbReference>
<dbReference type="GO" id="GO:0034967">
    <property type="term" value="C:Set3 complex"/>
    <property type="evidence" value="ECO:0000314"/>
    <property type="project" value="SGD"/>
</dbReference>
<dbReference type="GO" id="GO:0009267">
    <property type="term" value="P:cellular response to starvation"/>
    <property type="evidence" value="ECO:0000303"/>
    <property type="project" value="ComplexPortal"/>
</dbReference>
<dbReference type="GO" id="GO:0006338">
    <property type="term" value="P:chromatin remodeling"/>
    <property type="evidence" value="ECO:0000314"/>
    <property type="project" value="SGD"/>
</dbReference>
<dbReference type="GO" id="GO:0006974">
    <property type="term" value="P:DNA damage response"/>
    <property type="evidence" value="ECO:0000303"/>
    <property type="project" value="ComplexPortal"/>
</dbReference>
<dbReference type="GO" id="GO:0045835">
    <property type="term" value="P:negative regulation of meiotic nuclear division"/>
    <property type="evidence" value="ECO:0000314"/>
    <property type="project" value="ComplexPortal"/>
</dbReference>
<dbReference type="FunFam" id="1.25.40.20:FF:000553">
    <property type="entry name" value="Protein HOS4"/>
    <property type="match status" value="1"/>
</dbReference>
<dbReference type="Gene3D" id="1.25.40.20">
    <property type="entry name" value="Ankyrin repeat-containing domain"/>
    <property type="match status" value="2"/>
</dbReference>
<dbReference type="InterPro" id="IPR002110">
    <property type="entry name" value="Ankyrin_rpt"/>
</dbReference>
<dbReference type="InterPro" id="IPR036770">
    <property type="entry name" value="Ankyrin_rpt-contain_sf"/>
</dbReference>
<dbReference type="PANTHER" id="PTHR24171">
    <property type="entry name" value="ANKYRIN REPEAT DOMAIN-CONTAINING PROTEIN 39-RELATED"/>
    <property type="match status" value="1"/>
</dbReference>
<dbReference type="Pfam" id="PF12796">
    <property type="entry name" value="Ank_2"/>
    <property type="match status" value="2"/>
</dbReference>
<dbReference type="PRINTS" id="PR01415">
    <property type="entry name" value="ANKYRIN"/>
</dbReference>
<dbReference type="SMART" id="SM00248">
    <property type="entry name" value="ANK"/>
    <property type="match status" value="4"/>
</dbReference>
<dbReference type="SUPFAM" id="SSF48403">
    <property type="entry name" value="Ankyrin repeat"/>
    <property type="match status" value="1"/>
</dbReference>
<dbReference type="PROSITE" id="PS50297">
    <property type="entry name" value="ANK_REP_REGION"/>
    <property type="match status" value="1"/>
</dbReference>
<dbReference type="PROSITE" id="PS50088">
    <property type="entry name" value="ANK_REPEAT"/>
    <property type="match status" value="4"/>
</dbReference>
<comment type="function">
    <text>Unknown. Component of the Set3C complex, which is required to repress early/middle sporulation genes during meiosis.</text>
</comment>
<comment type="subunit">
    <text evidence="2">Identified in the Set3C complex with HOS2, HST1, SNT1, SIF2, CPR1 and SET3.</text>
</comment>
<comment type="interaction">
    <interactant intactId="EBI-8492">
        <id>P40480</id>
    </interactant>
    <interactant intactId="EBI-17136">
        <id>P38262</id>
        <label>SIF2</label>
    </interactant>
    <organismsDiffer>false</organismsDiffer>
    <experiments>6</experiments>
</comment>
<accession>P40480</accession>
<accession>D6VVH5</accession>
<sequence>MNETTTKQPLKKRSLSSYLSNVSTRREELEKISKQETSEEEDTAGKHEQRETLSEEVSDKFPENVASFRSQTTSVHQATQNNLNAKESEDLAHKNDASSHEGEVNGDSRPDDVPETNEKISQAIRAKISSSSSSPNVRNVDIQNHQPFSRDQLRAMLKEPKRKTVDDFIEEEGLGAVEEEDLSDEVLEKNTTEPENVEKDIEYSDSDKDTDDVGSDDPTAPNSPIKLGRRKLVRGDQLDATTSSMFNNESDSELSDIDDSKNIALSSSLFRGGSSPVKETNNNLSNMNSSPAQNPKRGSVSRSNDSNKSSHIAVSKRPKQKKGIYRDSGGRTRLQIACDKGKYDVVKKMIEEGGYDINDQDNAGNTALHEAALQGHIEIVELLIENGADVNIKSIEMFGDTPLIDASANGHLDVVKYLLKNGADPTIRNAKGLTAFESVDDESEFDDEEDQKILREIKKRLSIAAKKWTNRAGIHNDKSKNGNNAHTIDQPPFDNTTKAKNEKAADSPSMASNIDEKAPEEEFYWTDVTSRAGKEKLFKASKEGHLPYVGTYVENGGKIDLRSFFESVKCGHEDITSIFLAFGFPVNQTSRDNKTSALMVAVGRGHLGTVKLLLEAGADPTKRDKKGRTALYYAKNSIMGITNSEEIQLIENAINNYLKKHSEDNNDDDDDDDNNNETYKHEKKREKTQSPILASRRSATPRIEDEEDDTRMLNLADDDFNNDRDVKESTTSDSRKRLDDNENVGTQYSLDWKKRKTNALQDEEKLKSISPLSMEPHSPKKAKSVEISKIHEETAAEREARLKEEEEYRKKRLEKKRKKEQELLQKLAEDEKKRIEEQEKQKVLEMERLEKATLEKARKMEREKEMEEISYRRAVRDLYPLGLKIINFNDKLDYKRFLPLYYFVDEKNDKFVLDLQVMILLKDIDLLSKDNQPTSEKIPVDPSHLTPLWNMLKFIFLYGGSYDDKKNNMENKRYVVNFDGVDLDTKIGYELLEYKKFVSLPMAWIKWDNVVIENHAKRKEIEGNMIQISINEFARWRNDKLNKAQQPTRKQRSLKIPRELPVKFQHRMSISSVLQQTSKEPFW</sequence>
<organism>
    <name type="scientific">Saccharomyces cerevisiae (strain ATCC 204508 / S288c)</name>
    <name type="common">Baker's yeast</name>
    <dbReference type="NCBI Taxonomy" id="559292"/>
    <lineage>
        <taxon>Eukaryota</taxon>
        <taxon>Fungi</taxon>
        <taxon>Dikarya</taxon>
        <taxon>Ascomycota</taxon>
        <taxon>Saccharomycotina</taxon>
        <taxon>Saccharomycetes</taxon>
        <taxon>Saccharomycetales</taxon>
        <taxon>Saccharomycetaceae</taxon>
        <taxon>Saccharomyces</taxon>
    </lineage>
</organism>
<reference key="1">
    <citation type="journal article" date="1997" name="Nature">
        <title>The nucleotide sequence of Saccharomyces cerevisiae chromosome IX.</title>
        <authorList>
            <person name="Churcher C.M."/>
            <person name="Bowman S."/>
            <person name="Badcock K."/>
            <person name="Bankier A.T."/>
            <person name="Brown D."/>
            <person name="Chillingworth T."/>
            <person name="Connor R."/>
            <person name="Devlin K."/>
            <person name="Gentles S."/>
            <person name="Hamlin N."/>
            <person name="Harris D.E."/>
            <person name="Horsnell T."/>
            <person name="Hunt S."/>
            <person name="Jagels K."/>
            <person name="Jones M."/>
            <person name="Lye G."/>
            <person name="Moule S."/>
            <person name="Odell C."/>
            <person name="Pearson D."/>
            <person name="Rajandream M.A."/>
            <person name="Rice P."/>
            <person name="Rowley N."/>
            <person name="Skelton J."/>
            <person name="Smith V."/>
            <person name="Walsh S.V."/>
            <person name="Whitehead S."/>
            <person name="Barrell B.G."/>
        </authorList>
    </citation>
    <scope>NUCLEOTIDE SEQUENCE [LARGE SCALE GENOMIC DNA]</scope>
    <source>
        <strain>ATCC 204508 / S288c</strain>
    </source>
</reference>
<reference key="2">
    <citation type="journal article" date="2014" name="G3 (Bethesda)">
        <title>The reference genome sequence of Saccharomyces cerevisiae: Then and now.</title>
        <authorList>
            <person name="Engel S.R."/>
            <person name="Dietrich F.S."/>
            <person name="Fisk D.G."/>
            <person name="Binkley G."/>
            <person name="Balakrishnan R."/>
            <person name="Costanzo M.C."/>
            <person name="Dwight S.S."/>
            <person name="Hitz B.C."/>
            <person name="Karra K."/>
            <person name="Nash R.S."/>
            <person name="Weng S."/>
            <person name="Wong E.D."/>
            <person name="Lloyd P."/>
            <person name="Skrzypek M.S."/>
            <person name="Miyasato S.R."/>
            <person name="Simison M."/>
            <person name="Cherry J.M."/>
        </authorList>
    </citation>
    <scope>GENOME REANNOTATION</scope>
    <source>
        <strain>ATCC 204508 / S288c</strain>
    </source>
</reference>
<reference key="3">
    <citation type="journal article" date="2001" name="Genes Dev.">
        <title>The S. cerevisiae SET3 complex includes two histone deacetylases, Hos2 and Hst1, and is a meiotic-specific repressor of the sporulation gene program.</title>
        <authorList>
            <person name="Pijnappel W.W.M.P."/>
            <person name="Schaft D."/>
            <person name="Roguev A."/>
            <person name="Shevchenko A."/>
            <person name="Tekotte H."/>
            <person name="Wilm M."/>
            <person name="Rigaut G."/>
            <person name="Seraphin B."/>
            <person name="Aasland R."/>
            <person name="Stewart A.F."/>
        </authorList>
    </citation>
    <scope>IDENTIFICATION IN A COMPLEX WITH HOS2; HST1; SNT1; SIF2; CPR1 AND SET3</scope>
</reference>
<reference key="4">
    <citation type="journal article" date="2007" name="J. Proteome Res.">
        <title>Large-scale phosphorylation analysis of alpha-factor-arrested Saccharomyces cerevisiae.</title>
        <authorList>
            <person name="Li X."/>
            <person name="Gerber S.A."/>
            <person name="Rudner A.D."/>
            <person name="Beausoleil S.A."/>
            <person name="Haas W."/>
            <person name="Villen J."/>
            <person name="Elias J.E."/>
            <person name="Gygi S.P."/>
        </authorList>
    </citation>
    <scope>PHOSPHORYLATION [LARGE SCALE ANALYSIS] AT SER-778</scope>
    <scope>IDENTIFICATION BY MASS SPECTROMETRY [LARGE SCALE ANALYSIS]</scope>
    <source>
        <strain>ADR376</strain>
    </source>
</reference>
<reference key="5">
    <citation type="journal article" date="2008" name="Mol. Cell. Proteomics">
        <title>A multidimensional chromatography technology for in-depth phosphoproteome analysis.</title>
        <authorList>
            <person name="Albuquerque C.P."/>
            <person name="Smolka M.B."/>
            <person name="Payne S.H."/>
            <person name="Bafna V."/>
            <person name="Eng J."/>
            <person name="Zhou H."/>
        </authorList>
    </citation>
    <scope>PHOSPHORYLATION [LARGE SCALE ANALYSIS] AT SER-67; SER-698 AND THR-700</scope>
    <scope>IDENTIFICATION BY MASS SPECTROMETRY [LARGE SCALE ANALYSIS]</scope>
</reference>
<reference key="6">
    <citation type="journal article" date="2009" name="Science">
        <title>Global analysis of Cdk1 substrate phosphorylation sites provides insights into evolution.</title>
        <authorList>
            <person name="Holt L.J."/>
            <person name="Tuch B.B."/>
            <person name="Villen J."/>
            <person name="Johnson A.D."/>
            <person name="Gygi S.P."/>
            <person name="Morgan D.O."/>
        </authorList>
    </citation>
    <scope>PHOSPHORYLATION [LARGE SCALE ANALYSIS] AT SER-14; SER-16; THR-37; SER-290; SER-507 AND SER-778</scope>
    <scope>IDENTIFICATION BY MASS SPECTROMETRY [LARGE SCALE ANALYSIS]</scope>
</reference>
<reference key="7">
    <citation type="journal article" date="2012" name="Proc. Natl. Acad. Sci. U.S.A.">
        <title>N-terminal acetylome analyses and functional insights of the N-terminal acetyltransferase NatB.</title>
        <authorList>
            <person name="Van Damme P."/>
            <person name="Lasa M."/>
            <person name="Polevoda B."/>
            <person name="Gazquez C."/>
            <person name="Elosegui-Artola A."/>
            <person name="Kim D.S."/>
            <person name="De Juan-Pardo E."/>
            <person name="Demeyer K."/>
            <person name="Hole K."/>
            <person name="Larrea E."/>
            <person name="Timmerman E."/>
            <person name="Prieto J."/>
            <person name="Arnesen T."/>
            <person name="Sherman F."/>
            <person name="Gevaert K."/>
            <person name="Aldabe R."/>
        </authorList>
    </citation>
    <scope>IDENTIFICATION BY MASS SPECTROMETRY [LARGE SCALE ANALYSIS]</scope>
</reference>
<protein>
    <recommendedName>
        <fullName>Protein HOS4</fullName>
    </recommendedName>
</protein>
<name>HOS4_YEAST</name>
<gene>
    <name type="primary">HOS4</name>
    <name type="ordered locus">YIL112W</name>
</gene>
<evidence type="ECO:0000256" key="1">
    <source>
        <dbReference type="SAM" id="MobiDB-lite"/>
    </source>
</evidence>
<evidence type="ECO:0000269" key="2">
    <source>
    </source>
</evidence>
<evidence type="ECO:0007744" key="3">
    <source>
    </source>
</evidence>
<evidence type="ECO:0007744" key="4">
    <source>
    </source>
</evidence>
<evidence type="ECO:0007744" key="5">
    <source>
    </source>
</evidence>
<keyword id="KW-0040">ANK repeat</keyword>
<keyword id="KW-0597">Phosphoprotein</keyword>
<keyword id="KW-1185">Reference proteome</keyword>
<keyword id="KW-0677">Repeat</keyword>